<evidence type="ECO:0000255" key="1">
    <source>
        <dbReference type="HAMAP-Rule" id="MF_01093"/>
    </source>
</evidence>
<evidence type="ECO:0000256" key="2">
    <source>
        <dbReference type="SAM" id="MobiDB-lite"/>
    </source>
</evidence>
<organism>
    <name type="scientific">Methanobrevibacter ruminantium (strain ATCC 35063 / DSM 1093 / JCM 13430 / OCM 146 / M1)</name>
    <name type="common">Methanobacterium ruminantium</name>
    <dbReference type="NCBI Taxonomy" id="634498"/>
    <lineage>
        <taxon>Archaea</taxon>
        <taxon>Methanobacteriati</taxon>
        <taxon>Methanobacteriota</taxon>
        <taxon>Methanomada group</taxon>
        <taxon>Methanobacteria</taxon>
        <taxon>Methanobacteriales</taxon>
        <taxon>Methanobacteriaceae</taxon>
        <taxon>Methanobrevibacter</taxon>
    </lineage>
</organism>
<gene>
    <name evidence="1" type="primary">mtrA2</name>
    <name type="ordered locus">mru_0441</name>
</gene>
<accession>D3E0P6</accession>
<name>MTRA2_METRM</name>
<reference key="1">
    <citation type="journal article" date="2010" name="PLoS ONE">
        <title>The genome sequence of the rumen methanogen Methanobrevibacter ruminantium reveals new possibilities for controlling ruminant methane emissions.</title>
        <authorList>
            <person name="Leahy S.C."/>
            <person name="Kelly W.J."/>
            <person name="Altermann E."/>
            <person name="Ronimus R.S."/>
            <person name="Yeoman C.J."/>
            <person name="Pacheco D.M."/>
            <person name="Li D."/>
            <person name="Kong Z."/>
            <person name="McTavish S."/>
            <person name="Sang C."/>
            <person name="Lambie S.C."/>
            <person name="Janssen P.H."/>
            <person name="Dey D."/>
            <person name="Attwood G.T."/>
        </authorList>
    </citation>
    <scope>NUCLEOTIDE SEQUENCE [LARGE SCALE GENOMIC DNA]</scope>
    <source>
        <strain>ATCC 35063 / DSM 1093 / JCM 13430 / OCM 146 / M1</strain>
    </source>
</reference>
<protein>
    <recommendedName>
        <fullName evidence="1">Tetrahydromethanopterin S-methyltransferase subunit A 2</fullName>
        <ecNumber evidence="1">7.2.1.4</ecNumber>
    </recommendedName>
    <alternativeName>
        <fullName evidence="1">N5-methyltetrahydromethanopterin--coenzyme M methyltransferase subunit A 2</fullName>
    </alternativeName>
</protein>
<proteinExistence type="inferred from homology"/>
<feature type="chain" id="PRO_0000403060" description="Tetrahydromethanopterin S-methyltransferase subunit A 2">
    <location>
        <begin position="1"/>
        <end position="193"/>
    </location>
</feature>
<feature type="topological domain" description="Cytoplasmic" evidence="1">
    <location>
        <begin position="1"/>
        <end position="38"/>
    </location>
</feature>
<feature type="transmembrane region" description="Helical" evidence="1">
    <location>
        <begin position="39"/>
        <end position="58"/>
    </location>
</feature>
<feature type="topological domain" description="Extracellular" evidence="1">
    <location>
        <begin position="59"/>
        <end position="193"/>
    </location>
</feature>
<feature type="region of interest" description="Disordered" evidence="2">
    <location>
        <begin position="174"/>
        <end position="193"/>
    </location>
</feature>
<feature type="binding site" evidence="1">
    <location>
        <position position="84"/>
    </location>
    <ligand>
        <name>5-hydroxybenzimidazolylcob(I)amide</name>
        <dbReference type="ChEBI" id="CHEBI:60494"/>
        <note>cofactor</note>
    </ligand>
</feature>
<keyword id="KW-1003">Cell membrane</keyword>
<keyword id="KW-0170">Cobalt</keyword>
<keyword id="KW-0472">Membrane</keyword>
<keyword id="KW-0484">Methanogenesis</keyword>
<keyword id="KW-0489">Methyltransferase</keyword>
<keyword id="KW-0554">One-carbon metabolism</keyword>
<keyword id="KW-0808">Transferase</keyword>
<keyword id="KW-1278">Translocase</keyword>
<keyword id="KW-0812">Transmembrane</keyword>
<keyword id="KW-1133">Transmembrane helix</keyword>
<sequence length="193" mass="20713">MADKKPTAENWPVVSGDYIVGDPESPVAVTTLASHNEDIPAAAGAAIAGPCKTENLGIEKVVANIISNPNIRFLILCGAEVQGHITGQSFKALYENGCDPEKKKITGATGAIPFVENIPMEGVERFQQQLELVDMIDNEDGGAITAKVKECIEKDPGAFEEDSLVIKIDEERYSKKSSFVESSSESEKIESEA</sequence>
<dbReference type="EC" id="7.2.1.4" evidence="1"/>
<dbReference type="EMBL" id="CP001719">
    <property type="protein sequence ID" value="ADC46292.1"/>
    <property type="molecule type" value="Genomic_DNA"/>
</dbReference>
<dbReference type="RefSeq" id="WP_012955243.1">
    <property type="nucleotide sequence ID" value="NC_013790.1"/>
</dbReference>
<dbReference type="SMR" id="D3E0P6"/>
<dbReference type="STRING" id="634498.mru_0441"/>
<dbReference type="GeneID" id="8770081"/>
<dbReference type="KEGG" id="mru:mru_0441"/>
<dbReference type="PATRIC" id="fig|634498.28.peg.443"/>
<dbReference type="eggNOG" id="arCOG03221">
    <property type="taxonomic scope" value="Archaea"/>
</dbReference>
<dbReference type="HOGENOM" id="CLU_100863_1_0_2"/>
<dbReference type="OrthoDB" id="130682at2157"/>
<dbReference type="UniPathway" id="UPA00640">
    <property type="reaction ID" value="UER00698"/>
</dbReference>
<dbReference type="Proteomes" id="UP000008680">
    <property type="component" value="Chromosome"/>
</dbReference>
<dbReference type="GO" id="GO:0005886">
    <property type="term" value="C:plasma membrane"/>
    <property type="evidence" value="ECO:0007669"/>
    <property type="project" value="UniProtKB-SubCell"/>
</dbReference>
<dbReference type="GO" id="GO:0050897">
    <property type="term" value="F:cobalt ion binding"/>
    <property type="evidence" value="ECO:0007669"/>
    <property type="project" value="InterPro"/>
</dbReference>
<dbReference type="GO" id="GO:0030269">
    <property type="term" value="F:tetrahydromethanopterin S-methyltransferase activity"/>
    <property type="evidence" value="ECO:0007669"/>
    <property type="project" value="UniProtKB-UniRule"/>
</dbReference>
<dbReference type="GO" id="GO:0019386">
    <property type="term" value="P:methanogenesis, from carbon dioxide"/>
    <property type="evidence" value="ECO:0007669"/>
    <property type="project" value="UniProtKB-UniRule"/>
</dbReference>
<dbReference type="GO" id="GO:0032259">
    <property type="term" value="P:methylation"/>
    <property type="evidence" value="ECO:0007669"/>
    <property type="project" value="UniProtKB-KW"/>
</dbReference>
<dbReference type="GO" id="GO:0006730">
    <property type="term" value="P:one-carbon metabolic process"/>
    <property type="evidence" value="ECO:0007669"/>
    <property type="project" value="UniProtKB-UniRule"/>
</dbReference>
<dbReference type="HAMAP" id="MF_01093">
    <property type="entry name" value="MtrA"/>
    <property type="match status" value="1"/>
</dbReference>
<dbReference type="InterPro" id="IPR030688">
    <property type="entry name" value="MeTrfase_MtrA/MtxA"/>
</dbReference>
<dbReference type="InterPro" id="IPR005778">
    <property type="entry name" value="MtrA"/>
</dbReference>
<dbReference type="NCBIfam" id="TIGR01111">
    <property type="entry name" value="mtrA"/>
    <property type="match status" value="1"/>
</dbReference>
<dbReference type="NCBIfam" id="NF002126">
    <property type="entry name" value="PRK00964.1-4"/>
    <property type="match status" value="1"/>
</dbReference>
<dbReference type="Pfam" id="PF04208">
    <property type="entry name" value="MtrA"/>
    <property type="match status" value="1"/>
</dbReference>
<dbReference type="PIRSF" id="PIRSF500207">
    <property type="entry name" value="MtrA"/>
    <property type="match status" value="1"/>
</dbReference>
<dbReference type="PIRSF" id="PIRSF009452">
    <property type="entry name" value="MtrA_MtxA"/>
    <property type="match status" value="1"/>
</dbReference>
<comment type="function">
    <text evidence="1">Part of a complex that catalyzes the formation of methyl-coenzyme M and tetrahydromethanopterin from coenzyme M and methyl-tetrahydromethanopterin. This is an energy-conserving, sodium-ion translocating step.</text>
</comment>
<comment type="catalytic activity">
    <reaction evidence="1">
        <text>5-methyl-5,6,7,8-tetrahydromethanopterin + coenzyme M + 2 Na(+)(in) = 5,6,7,8-tetrahydromethanopterin + methyl-coenzyme M + 2 Na(+)(out)</text>
        <dbReference type="Rhea" id="RHEA:53492"/>
        <dbReference type="ChEBI" id="CHEBI:29101"/>
        <dbReference type="ChEBI" id="CHEBI:58103"/>
        <dbReference type="ChEBI" id="CHEBI:58116"/>
        <dbReference type="ChEBI" id="CHEBI:58286"/>
        <dbReference type="ChEBI" id="CHEBI:58319"/>
        <dbReference type="EC" id="7.2.1.4"/>
    </reaction>
</comment>
<comment type="cofactor">
    <cofactor evidence="1">
        <name>5-hydroxybenzimidazolylcob(I)amide</name>
        <dbReference type="ChEBI" id="CHEBI:60494"/>
    </cofactor>
    <text evidence="1">Binds 1 5-hydroxybenzimidazolylcobamide group.</text>
</comment>
<comment type="pathway">
    <text evidence="1">One-carbon metabolism; methanogenesis from CO(2); methyl-coenzyme M from 5,10-methylene-5,6,7,8-tetrahydromethanopterin: step 2/2.</text>
</comment>
<comment type="subunit">
    <text evidence="1">The complex is composed of 8 subunits; MtrA, MtrB, MtrC, MtrD, MtrE, MtrF, MtrG and MtrH.</text>
</comment>
<comment type="subcellular location">
    <subcellularLocation>
        <location evidence="1">Cell membrane</location>
        <topology evidence="1">Single-pass membrane protein</topology>
    </subcellularLocation>
</comment>
<comment type="similarity">
    <text evidence="1">Belongs to the MtrA family.</text>
</comment>